<gene>
    <name evidence="1" type="primary">lolD</name>
    <name type="ordered locus">VP0978</name>
</gene>
<name>LOLD_VIBPA</name>
<proteinExistence type="inferred from homology"/>
<reference key="1">
    <citation type="journal article" date="2003" name="Lancet">
        <title>Genome sequence of Vibrio parahaemolyticus: a pathogenic mechanism distinct from that of V. cholerae.</title>
        <authorList>
            <person name="Makino K."/>
            <person name="Oshima K."/>
            <person name="Kurokawa K."/>
            <person name="Yokoyama K."/>
            <person name="Uda T."/>
            <person name="Tagomori K."/>
            <person name="Iijima Y."/>
            <person name="Najima M."/>
            <person name="Nakano M."/>
            <person name="Yamashita A."/>
            <person name="Kubota Y."/>
            <person name="Kimura S."/>
            <person name="Yasunaga T."/>
            <person name="Honda T."/>
            <person name="Shinagawa H."/>
            <person name="Hattori M."/>
            <person name="Iida T."/>
        </authorList>
    </citation>
    <scope>NUCLEOTIDE SEQUENCE [LARGE SCALE GENOMIC DNA]</scope>
    <source>
        <strain>RIMD 2210633</strain>
    </source>
</reference>
<accession>Q87R20</accession>
<dbReference type="EC" id="7.6.2.-" evidence="1"/>
<dbReference type="EMBL" id="BA000031">
    <property type="protein sequence ID" value="BAC59241.1"/>
    <property type="molecule type" value="Genomic_DNA"/>
</dbReference>
<dbReference type="RefSeq" id="NP_797357.1">
    <property type="nucleotide sequence ID" value="NC_004603.1"/>
</dbReference>
<dbReference type="RefSeq" id="WP_005481886.1">
    <property type="nucleotide sequence ID" value="NC_004603.1"/>
</dbReference>
<dbReference type="SMR" id="Q87R20"/>
<dbReference type="GeneID" id="1188482"/>
<dbReference type="KEGG" id="vpa:VP0978"/>
<dbReference type="PATRIC" id="fig|223926.6.peg.927"/>
<dbReference type="eggNOG" id="COG1136">
    <property type="taxonomic scope" value="Bacteria"/>
</dbReference>
<dbReference type="HOGENOM" id="CLU_000604_1_22_6"/>
<dbReference type="Proteomes" id="UP000002493">
    <property type="component" value="Chromosome 1"/>
</dbReference>
<dbReference type="GO" id="GO:0005886">
    <property type="term" value="C:plasma membrane"/>
    <property type="evidence" value="ECO:0007669"/>
    <property type="project" value="UniProtKB-SubCell"/>
</dbReference>
<dbReference type="GO" id="GO:0005524">
    <property type="term" value="F:ATP binding"/>
    <property type="evidence" value="ECO:0007669"/>
    <property type="project" value="UniProtKB-KW"/>
</dbReference>
<dbReference type="GO" id="GO:0016887">
    <property type="term" value="F:ATP hydrolysis activity"/>
    <property type="evidence" value="ECO:0007669"/>
    <property type="project" value="InterPro"/>
</dbReference>
<dbReference type="GO" id="GO:0022857">
    <property type="term" value="F:transmembrane transporter activity"/>
    <property type="evidence" value="ECO:0007669"/>
    <property type="project" value="TreeGrafter"/>
</dbReference>
<dbReference type="GO" id="GO:0044874">
    <property type="term" value="P:lipoprotein localization to outer membrane"/>
    <property type="evidence" value="ECO:0007669"/>
    <property type="project" value="TreeGrafter"/>
</dbReference>
<dbReference type="GO" id="GO:0089705">
    <property type="term" value="P:protein localization to outer membrane"/>
    <property type="evidence" value="ECO:0007669"/>
    <property type="project" value="TreeGrafter"/>
</dbReference>
<dbReference type="CDD" id="cd03255">
    <property type="entry name" value="ABC_MJ0796_LolCDE_FtsE"/>
    <property type="match status" value="1"/>
</dbReference>
<dbReference type="FunFam" id="3.40.50.300:FF:000230">
    <property type="entry name" value="Lipoprotein-releasing system ATP-binding protein LolD"/>
    <property type="match status" value="1"/>
</dbReference>
<dbReference type="Gene3D" id="3.40.50.300">
    <property type="entry name" value="P-loop containing nucleotide triphosphate hydrolases"/>
    <property type="match status" value="1"/>
</dbReference>
<dbReference type="InterPro" id="IPR003593">
    <property type="entry name" value="AAA+_ATPase"/>
</dbReference>
<dbReference type="InterPro" id="IPR003439">
    <property type="entry name" value="ABC_transporter-like_ATP-bd"/>
</dbReference>
<dbReference type="InterPro" id="IPR017871">
    <property type="entry name" value="ABC_transporter-like_CS"/>
</dbReference>
<dbReference type="InterPro" id="IPR015854">
    <property type="entry name" value="ABC_transpr_LolD-like"/>
</dbReference>
<dbReference type="InterPro" id="IPR011924">
    <property type="entry name" value="LolD_lipo_ATP-bd"/>
</dbReference>
<dbReference type="InterPro" id="IPR017911">
    <property type="entry name" value="MacB-like_ATP-bd"/>
</dbReference>
<dbReference type="InterPro" id="IPR027417">
    <property type="entry name" value="P-loop_NTPase"/>
</dbReference>
<dbReference type="NCBIfam" id="TIGR02211">
    <property type="entry name" value="LolD_lipo_ex"/>
    <property type="match status" value="1"/>
</dbReference>
<dbReference type="PANTHER" id="PTHR24220">
    <property type="entry name" value="IMPORT ATP-BINDING PROTEIN"/>
    <property type="match status" value="1"/>
</dbReference>
<dbReference type="PANTHER" id="PTHR24220:SF689">
    <property type="entry name" value="LIPOPROTEIN-RELEASING SYSTEM ATP-BINDING PROTEIN LOLD"/>
    <property type="match status" value="1"/>
</dbReference>
<dbReference type="Pfam" id="PF00005">
    <property type="entry name" value="ABC_tran"/>
    <property type="match status" value="1"/>
</dbReference>
<dbReference type="SMART" id="SM00382">
    <property type="entry name" value="AAA"/>
    <property type="match status" value="1"/>
</dbReference>
<dbReference type="SUPFAM" id="SSF52540">
    <property type="entry name" value="P-loop containing nucleoside triphosphate hydrolases"/>
    <property type="match status" value="1"/>
</dbReference>
<dbReference type="PROSITE" id="PS00211">
    <property type="entry name" value="ABC_TRANSPORTER_1"/>
    <property type="match status" value="1"/>
</dbReference>
<dbReference type="PROSITE" id="PS50893">
    <property type="entry name" value="ABC_TRANSPORTER_2"/>
    <property type="match status" value="1"/>
</dbReference>
<dbReference type="PROSITE" id="PS51244">
    <property type="entry name" value="LOLD"/>
    <property type="match status" value="1"/>
</dbReference>
<comment type="function">
    <text evidence="1">Part of the ABC transporter complex LolCDE involved in the translocation of mature outer membrane-directed lipoproteins, from the inner membrane to the periplasmic chaperone, LolA. Responsible for the formation of the LolA-lipoprotein complex in an ATP-dependent manner.</text>
</comment>
<comment type="subunit">
    <text evidence="1">The complex is composed of two ATP-binding proteins (LolD) and two transmembrane proteins (LolC and LolE).</text>
</comment>
<comment type="subcellular location">
    <subcellularLocation>
        <location evidence="1">Cell inner membrane</location>
        <topology evidence="1">Peripheral membrane protein</topology>
    </subcellularLocation>
</comment>
<comment type="similarity">
    <text evidence="1">Belongs to the ABC transporter superfamily. Lipoprotein translocase (TC 3.A.1.125) family.</text>
</comment>
<feature type="chain" id="PRO_0000092464" description="Lipoprotein-releasing system ATP-binding protein LolD">
    <location>
        <begin position="1"/>
        <end position="235"/>
    </location>
</feature>
<feature type="domain" description="ABC transporter" evidence="1">
    <location>
        <begin position="5"/>
        <end position="235"/>
    </location>
</feature>
<feature type="binding site" evidence="1">
    <location>
        <begin position="41"/>
        <end position="48"/>
    </location>
    <ligand>
        <name>ATP</name>
        <dbReference type="ChEBI" id="CHEBI:30616"/>
    </ligand>
</feature>
<organism>
    <name type="scientific">Vibrio parahaemolyticus serotype O3:K6 (strain RIMD 2210633)</name>
    <dbReference type="NCBI Taxonomy" id="223926"/>
    <lineage>
        <taxon>Bacteria</taxon>
        <taxon>Pseudomonadati</taxon>
        <taxon>Pseudomonadota</taxon>
        <taxon>Gammaproteobacteria</taxon>
        <taxon>Vibrionales</taxon>
        <taxon>Vibrionaceae</taxon>
        <taxon>Vibrio</taxon>
    </lineage>
</organism>
<keyword id="KW-0067">ATP-binding</keyword>
<keyword id="KW-0997">Cell inner membrane</keyword>
<keyword id="KW-1003">Cell membrane</keyword>
<keyword id="KW-0472">Membrane</keyword>
<keyword id="KW-0547">Nucleotide-binding</keyword>
<keyword id="KW-1278">Translocase</keyword>
<keyword id="KW-0813">Transport</keyword>
<evidence type="ECO:0000255" key="1">
    <source>
        <dbReference type="HAMAP-Rule" id="MF_01708"/>
    </source>
</evidence>
<protein>
    <recommendedName>
        <fullName evidence="1">Lipoprotein-releasing system ATP-binding protein LolD</fullName>
        <ecNumber evidence="1">7.6.2.-</ecNumber>
    </recommendedName>
</protein>
<sequence>MNKLLECRDIRKVYREGSLDTEVLKGVSFDIDKGELVSIVGSSGSGKSTLLHILGALDDATQGEVDFLGQNLSALSSNKQAALRNKHLGFVYQFHHLLADFTALENVAMPLLIGGIKVTEAKQAAKALLEKVGLSHRMDHRPSELSGGERQRVAIARALVNKPDLVLADEPTGNLDHNTALAIYDLMRELNKESNIAFLVVTHDNELAAKMDRQMHMQDGLLVDRLMTESASVEG</sequence>